<accession>P17503</accession>
<accession>Q25997</accession>
<accession>W7KBZ1</accession>
<keyword id="KW-0472">Membrane</keyword>
<keyword id="KW-1185">Reference proteome</keyword>
<keyword id="KW-0732">Signal</keyword>
<keyword id="KW-0812">Transmembrane</keyword>
<keyword id="KW-1133">Transmembrane helix</keyword>
<keyword id="KW-0926">Vacuole</keyword>
<reference key="1">
    <citation type="submission" date="1992-02" db="EMBL/GenBank/DDBJ databases">
        <authorList>
            <person name="Alano P."/>
            <person name="Bhatti S."/>
            <person name="Smith D.K."/>
            <person name="Bruce M.C."/>
            <person name="Carter R."/>
            <person name="Elliott J.F."/>
        </authorList>
    </citation>
    <scope>NUCLEOTIDE SEQUENCE [MRNA]</scope>
</reference>
<reference key="2">
    <citation type="journal article" date="1991" name="Mol. Biochem. Parasitol.">
        <title>A novel protein antigen of the malaria parasite Plasmodium falciparum, located on the surface of gametes and sporozoites.</title>
        <authorList>
            <person name="Moelans I.M.D."/>
            <person name="Meis J.F.G.M."/>
            <person name="Kocken C."/>
            <person name="Konings R.N.H."/>
            <person name="Schoenmakers J.G.G."/>
        </authorList>
    </citation>
    <scope>NUCLEOTIDE SEQUENCE [MRNA]</scope>
    <scope>SUBCELLULAR LOCATION</scope>
    <scope>DEVELOPMENTAL STAGE</scope>
</reference>
<reference evidence="11" key="3">
    <citation type="submission" date="2013-02" db="EMBL/GenBank/DDBJ databases">
        <title>The Genome Sequence of Plasmodium falciparum NF54.</title>
        <authorList>
            <consortium name="The Broad Institute Genome Sequencing Platform"/>
            <consortium name="The Broad Institute Genome Sequencing Center for Infectious Disease"/>
            <person name="Neafsey D."/>
            <person name="Cheeseman I."/>
            <person name="Volkman S."/>
            <person name="Adams J."/>
            <person name="Walker B."/>
            <person name="Young S.K."/>
            <person name="Zeng Q."/>
            <person name="Gargeya S."/>
            <person name="Fitzgerald M."/>
            <person name="Haas B."/>
            <person name="Abouelleil A."/>
            <person name="Alvarado L."/>
            <person name="Arachchi H.M."/>
            <person name="Berlin A.M."/>
            <person name="Chapman S.B."/>
            <person name="Dewar J."/>
            <person name="Goldberg J."/>
            <person name="Griggs A."/>
            <person name="Gujja S."/>
            <person name="Hansen M."/>
            <person name="Howarth C."/>
            <person name="Imamovic A."/>
            <person name="Larimer J."/>
            <person name="McCowan C."/>
            <person name="Murphy C."/>
            <person name="Neiman D."/>
            <person name="Pearson M."/>
            <person name="Priest M."/>
            <person name="Roberts A."/>
            <person name="Saif S."/>
            <person name="Shea T."/>
            <person name="Sisk P."/>
            <person name="Sykes S."/>
            <person name="Wortman J."/>
            <person name="Nusbaum C."/>
            <person name="Birren B."/>
        </authorList>
    </citation>
    <scope>NUCLEOTIDE SEQUENCE [LARGE SCALE GENOMIC DNA]</scope>
    <source>
        <strain evidence="11">NF54</strain>
    </source>
</reference>
<reference evidence="12" key="4">
    <citation type="submission" date="2017-11" db="EMBL/GenBank/DDBJ databases">
        <title>Plasmodium falciparum NF54 genome assembly.</title>
        <authorList>
            <person name="Bryant J.M."/>
            <person name="Baumgarten S."/>
            <person name="Scheidig-Benatar C."/>
            <person name="Scherf A."/>
        </authorList>
    </citation>
    <scope>NUCLEOTIDE SEQUENCE [LARGE SCALE GENOMIC DNA]</scope>
    <source>
        <strain evidence="10">NF54</strain>
    </source>
</reference>
<reference key="5">
    <citation type="submission" date="2018-05" db="EMBL/GenBank/DDBJ databases">
        <title>Genome assembly of Plasmodium falciparum NF54 DiCre.</title>
        <authorList>
            <person name="Baumgarten S."/>
            <person name="Treeck M."/>
            <person name="Scherf A."/>
        </authorList>
    </citation>
    <scope>NUCLEOTIDE SEQUENCE [LARGE SCALE GENOMIC DNA]</scope>
    <source>
        <strain evidence="9">NF54</strain>
    </source>
</reference>
<reference key="6">
    <citation type="journal article" date="1990" name="Nucleic Acids Res.">
        <title>Sequence coding for a sexual stage specific protein of Plasmodium falciparum.</title>
        <authorList>
            <person name="Bruce M.C."/>
            <person name="Baker D.A."/>
            <person name="Alano P."/>
            <person name="Rogers N.C."/>
            <person name="Graves P.M."/>
            <person name="Targett G.A.T."/>
            <person name="Carter R."/>
        </authorList>
    </citation>
    <scope>NUCLEOTIDE SEQUENCE [GENOMIC DNA] OF 13-157</scope>
</reference>
<reference evidence="8" key="7">
    <citation type="journal article" date="2021" name="Front. Cell. Infect. Microbiol.">
        <title>Studies of the Parasite-Midgut Interaction Reveal Plasmodium Proteins Important for Malaria Transmission to Mosquitoes.</title>
        <authorList>
            <person name="Niu G."/>
            <person name="Cui Y."/>
            <person name="Wang X."/>
            <person name="Keleta Y."/>
            <person name="Li J."/>
        </authorList>
    </citation>
    <scope>FUNCTION</scope>
    <scope>BIOTECHNOLOGY</scope>
</reference>
<protein>
    <recommendedName>
        <fullName evidence="1">Parasitophorous vacuole membrane protein S16</fullName>
    </recommendedName>
    <alternativeName>
        <fullName evidence="7">Sexual stage-specific protein S16</fullName>
    </alternativeName>
</protein>
<name>PFS16_PLAFO</name>
<sequence length="157" mass="16626">MNIRKFIPSLALMLIFFAFANLVLSDANDKAKKPAGKGSPSTLQTPGSSSGASLHAVGPNQGGLSQGLSGKDSADKMPLETQLAIEEIKSLSNMLDKKTTVNRNLIISTAVTNMIMLIILSGIVGFKVKKTKNADDDKGDKDKDKDNTDEGDEGDDS</sequence>
<comment type="function">
    <text evidence="1 5">Involved in male gametogenesis (By similarity). Required for exflagellation of male gametocytes (By similarity). May play a role in parasite transmission in the mosquito (PubMed:34262880). Binds to the mosquito vector midgut (PubMed:34262880).</text>
</comment>
<comment type="subcellular location">
    <subcellularLocation>
        <location evidence="4">Parasitophorous vacuole membrane</location>
        <topology evidence="8">Single-pass type I membrane protein</topology>
    </subcellularLocation>
    <subcellularLocation>
        <location evidence="1">Vacuole</location>
    </subcellularLocation>
    <text evidence="1">Localizes to the multi-laminate membrane whorls of the circular clefts in the infected erythrocyte cytoplasm and food vacuole membrane of the gametocyte.</text>
</comment>
<comment type="developmental stage">
    <text evidence="4">Expressed in gametocytes (at protein level) (PubMed:2038355). In the vector mosquito salivary glands, expressed in sporozoites (at protein level) (PubMed:2038355).</text>
</comment>
<comment type="biotechnology">
    <text evidence="5">Antibodies against Pfs16 partially reduce parasite transmission during the mosquito vector stage resulting in a significant reduction in the number of oocysts.</text>
</comment>
<feature type="signal peptide" evidence="2">
    <location>
        <begin position="1"/>
        <end position="25"/>
    </location>
</feature>
<feature type="chain" id="PRO_0000024628" description="Parasitophorous vacuole membrane protein S16" evidence="2">
    <location>
        <begin position="26"/>
        <end position="157"/>
    </location>
</feature>
<feature type="topological domain" description="Extracellular" evidence="8">
    <location>
        <begin position="26"/>
        <end position="105"/>
    </location>
</feature>
<feature type="transmembrane region" description="Helical" evidence="2">
    <location>
        <begin position="106"/>
        <end position="126"/>
    </location>
</feature>
<feature type="topological domain" description="Cytoplasmic" evidence="8">
    <location>
        <begin position="127"/>
        <end position="157"/>
    </location>
</feature>
<feature type="region of interest" description="Disordered" evidence="3">
    <location>
        <begin position="30"/>
        <end position="74"/>
    </location>
</feature>
<feature type="region of interest" description="Disordered" evidence="3">
    <location>
        <begin position="130"/>
        <end position="157"/>
    </location>
</feature>
<feature type="compositionally biased region" description="Polar residues" evidence="3">
    <location>
        <begin position="39"/>
        <end position="52"/>
    </location>
</feature>
<feature type="compositionally biased region" description="Basic and acidic residues" evidence="3">
    <location>
        <begin position="132"/>
        <end position="148"/>
    </location>
</feature>
<feature type="sequence conflict" description="In Ref. 2; AAA29733." evidence="8" ref="2">
    <original>Q</original>
    <variation>L</variation>
    <location>
        <position position="61"/>
    </location>
</feature>
<feature type="sequence conflict" description="In Ref. 2; AAA29733." evidence="8" ref="2">
    <original>M</original>
    <variation>MIK</variation>
    <location>
        <position position="116"/>
    </location>
</feature>
<gene>
    <name evidence="6" type="primary">Pfs16</name>
</gene>
<organism>
    <name type="scientific">Plasmodium falciparum (isolate NF54)</name>
    <dbReference type="NCBI Taxonomy" id="5843"/>
    <lineage>
        <taxon>Eukaryota</taxon>
        <taxon>Sar</taxon>
        <taxon>Alveolata</taxon>
        <taxon>Apicomplexa</taxon>
        <taxon>Aconoidasida</taxon>
        <taxon>Haemosporida</taxon>
        <taxon>Plasmodiidae</taxon>
        <taxon>Plasmodium</taxon>
        <taxon>Plasmodium (Laverania)</taxon>
    </lineage>
</organism>
<dbReference type="EMBL" id="M64107">
    <property type="protein sequence ID" value="AAA29454.1"/>
    <property type="molecule type" value="mRNA"/>
</dbReference>
<dbReference type="EMBL" id="M64705">
    <property type="protein sequence ID" value="AAA29733.1"/>
    <property type="molecule type" value="mRNA"/>
</dbReference>
<dbReference type="EMBL" id="KE123739">
    <property type="protein sequence ID" value="EWC90505.1"/>
    <property type="molecule type" value="Genomic_DNA"/>
</dbReference>
<dbReference type="EMBL" id="QFXU01000010">
    <property type="protein sequence ID" value="KAF4329979.1"/>
    <property type="molecule type" value="Genomic_DNA"/>
</dbReference>
<dbReference type="EMBL" id="NYMT01000003">
    <property type="protein sequence ID" value="PKC48765.1"/>
    <property type="molecule type" value="Genomic_DNA"/>
</dbReference>
<dbReference type="EMBL" id="X53030">
    <property type="protein sequence ID" value="CAA37203.1"/>
    <property type="molecule type" value="Genomic_DNA"/>
</dbReference>
<dbReference type="PIR" id="S30129">
    <property type="entry name" value="S30129"/>
</dbReference>
<dbReference type="SMR" id="P17503"/>
<dbReference type="TCDB" id="9.B.451.1.1">
    <property type="family name" value="the parasitophorous vacuole membrane protein (pfs16) family"/>
</dbReference>
<dbReference type="EnsemblProtists" id="EWC90505">
    <property type="protein sequence ID" value="EWC90505"/>
    <property type="gene ID" value="PFNF54_00669"/>
</dbReference>
<dbReference type="VEuPathDB" id="PlasmoDB:PfNF54_040011900"/>
<dbReference type="OMA" id="HICMHKE"/>
<dbReference type="Proteomes" id="UP000030673">
    <property type="component" value="Unassembled WGS sequence"/>
</dbReference>
<dbReference type="Proteomes" id="UP000232684">
    <property type="component" value="Unassembled WGS sequence"/>
</dbReference>
<dbReference type="Proteomes" id="UP000754359">
    <property type="component" value="Unassembled WGS sequence"/>
</dbReference>
<dbReference type="GO" id="GO:0016020">
    <property type="term" value="C:membrane"/>
    <property type="evidence" value="ECO:0007669"/>
    <property type="project" value="UniProtKB-KW"/>
</dbReference>
<dbReference type="GO" id="GO:0020005">
    <property type="term" value="C:symbiont-containing vacuole membrane"/>
    <property type="evidence" value="ECO:0007669"/>
    <property type="project" value="UniProtKB-SubCell"/>
</dbReference>
<dbReference type="GO" id="GO:0005773">
    <property type="term" value="C:vacuole"/>
    <property type="evidence" value="ECO:0007669"/>
    <property type="project" value="UniProtKB-SubCell"/>
</dbReference>
<dbReference type="Pfam" id="PF09716">
    <property type="entry name" value="ETRAMP"/>
    <property type="match status" value="1"/>
</dbReference>
<proteinExistence type="evidence at protein level"/>
<evidence type="ECO:0000250" key="1">
    <source>
        <dbReference type="UniProtKB" id="Q6ZMA7"/>
    </source>
</evidence>
<evidence type="ECO:0000255" key="2"/>
<evidence type="ECO:0000256" key="3">
    <source>
        <dbReference type="SAM" id="MobiDB-lite"/>
    </source>
</evidence>
<evidence type="ECO:0000269" key="4">
    <source>
    </source>
</evidence>
<evidence type="ECO:0000269" key="5">
    <source>
    </source>
</evidence>
<evidence type="ECO:0000303" key="6">
    <source>
    </source>
</evidence>
<evidence type="ECO:0000303" key="7">
    <source>
    </source>
</evidence>
<evidence type="ECO:0000305" key="8"/>
<evidence type="ECO:0000312" key="9">
    <source>
        <dbReference type="EMBL" id="KAF4329979.1"/>
    </source>
</evidence>
<evidence type="ECO:0000312" key="10">
    <source>
        <dbReference type="EMBL" id="PKC48765.1"/>
    </source>
</evidence>
<evidence type="ECO:0000312" key="11">
    <source>
        <dbReference type="Proteomes" id="UP000030673"/>
    </source>
</evidence>
<evidence type="ECO:0000312" key="12">
    <source>
        <dbReference type="Proteomes" id="UP000232684"/>
    </source>
</evidence>